<dbReference type="Proteomes" id="UP001155700">
    <property type="component" value="Unplaced"/>
</dbReference>
<dbReference type="GO" id="GO:0005576">
    <property type="term" value="C:extracellular region"/>
    <property type="evidence" value="ECO:0007669"/>
    <property type="project" value="UniProtKB-KW"/>
</dbReference>
<dbReference type="GO" id="GO:0042742">
    <property type="term" value="P:defense response to bacterium"/>
    <property type="evidence" value="ECO:0007669"/>
    <property type="project" value="UniProtKB-KW"/>
</dbReference>
<dbReference type="GO" id="GO:0050832">
    <property type="term" value="P:defense response to fungus"/>
    <property type="evidence" value="ECO:0007669"/>
    <property type="project" value="UniProtKB-KW"/>
</dbReference>
<dbReference type="GO" id="GO:0031640">
    <property type="term" value="P:killing of cells of another organism"/>
    <property type="evidence" value="ECO:0007669"/>
    <property type="project" value="UniProtKB-KW"/>
</dbReference>
<sequence length="24" mass="2762">MFFSSKKCKTVXKTFRGPCVRNAN</sequence>
<proteinExistence type="evidence at protein level"/>
<evidence type="ECO:0000305" key="1"/>
<protein>
    <recommendedName>
        <fullName>Defensin D5</fullName>
    </recommendedName>
    <alternativeName>
        <fullName>Antimicrobial peptide D5</fullName>
    </alternativeName>
    <alternativeName>
        <fullName>So-D5</fullName>
    </alternativeName>
</protein>
<reference evidence="1" key="1">
    <citation type="journal article" date="1998" name="FEBS Lett.">
        <title>Novel defensin subfamily from spinach (Spinacia oleracea).</title>
        <authorList>
            <person name="Segura A."/>
            <person name="Moreno M."/>
            <person name="Molina A."/>
            <person name="Garcia-Olmedo F."/>
        </authorList>
    </citation>
    <scope>PROTEIN SEQUENCE</scope>
    <source>
        <strain>cv. Matador</strain>
        <tissue>Leaf</tissue>
    </source>
</reference>
<comment type="function">
    <text>Antimicrobial peptide. Active against Fusarium spp., Gram-positive and Gram-negative bacterial pathogens.</text>
</comment>
<comment type="subcellular location">
    <subcellularLocation>
        <location evidence="1">Secreted</location>
        <location evidence="1">Cell wall</location>
    </subcellularLocation>
</comment>
<comment type="tissue specificity">
    <text>Distributed in the epidermal cell layer of leaves and in the subepidermal layer region of stems. Not in roots.</text>
</comment>
<comment type="developmental stage">
    <text>Present throughout the life of the leaf.</text>
</comment>
<comment type="similarity">
    <text evidence="1">Belongs to the DEFL family. Group IV subfamily.</text>
</comment>
<feature type="chain" id="PRO_0000074255" description="Defensin D5">
    <location>
        <begin position="1"/>
        <end position="24" status="greater than"/>
    </location>
</feature>
<feature type="non-terminal residue" evidence="1">
    <location>
        <position position="24"/>
    </location>
</feature>
<accession>P81568</accession>
<organism evidence="1">
    <name type="scientific">Spinacia oleracea</name>
    <name type="common">Spinach</name>
    <dbReference type="NCBI Taxonomy" id="3562"/>
    <lineage>
        <taxon>Eukaryota</taxon>
        <taxon>Viridiplantae</taxon>
        <taxon>Streptophyta</taxon>
        <taxon>Embryophyta</taxon>
        <taxon>Tracheophyta</taxon>
        <taxon>Spermatophyta</taxon>
        <taxon>Magnoliopsida</taxon>
        <taxon>eudicotyledons</taxon>
        <taxon>Gunneridae</taxon>
        <taxon>Pentapetalae</taxon>
        <taxon>Caryophyllales</taxon>
        <taxon>Chenopodiaceae</taxon>
        <taxon>Chenopodioideae</taxon>
        <taxon>Anserineae</taxon>
        <taxon>Spinacia</taxon>
    </lineage>
</organism>
<name>DEFD5_SPIOL</name>
<keyword id="KW-0044">Antibiotic</keyword>
<keyword id="KW-0929">Antimicrobial</keyword>
<keyword id="KW-0134">Cell wall</keyword>
<keyword id="KW-0903">Direct protein sequencing</keyword>
<keyword id="KW-0295">Fungicide</keyword>
<keyword id="KW-0611">Plant defense</keyword>
<keyword id="KW-1185">Reference proteome</keyword>
<keyword id="KW-0964">Secreted</keyword>